<accession>P40237</accession>
<feature type="chain" id="PRO_0000219227" description="CD82 antigen">
    <location>
        <begin position="1"/>
        <end position="266"/>
    </location>
</feature>
<feature type="topological domain" description="Cytoplasmic" evidence="2">
    <location>
        <begin position="1"/>
        <end position="11"/>
    </location>
</feature>
<feature type="transmembrane region" description="Helical" evidence="2">
    <location>
        <begin position="12"/>
        <end position="32"/>
    </location>
</feature>
<feature type="topological domain" description="Extracellular" evidence="2">
    <location>
        <begin position="33"/>
        <end position="53"/>
    </location>
</feature>
<feature type="transmembrane region" description="Helical" evidence="2">
    <location>
        <begin position="54"/>
        <end position="72"/>
    </location>
</feature>
<feature type="topological domain" description="Cytoplasmic" evidence="2">
    <location>
        <begin position="73"/>
        <end position="83"/>
    </location>
</feature>
<feature type="transmembrane region" description="Helical" evidence="2">
    <location>
        <begin position="84"/>
        <end position="110"/>
    </location>
</feature>
<feature type="topological domain" description="Extracellular" evidence="2">
    <location>
        <begin position="111"/>
        <end position="227"/>
    </location>
</feature>
<feature type="transmembrane region" description="Helical" evidence="2">
    <location>
        <begin position="228"/>
        <end position="249"/>
    </location>
</feature>
<feature type="topological domain" description="Cytoplasmic" evidence="2">
    <location>
        <begin position="250"/>
        <end position="266"/>
    </location>
</feature>
<feature type="lipid moiety-binding region" description="S-palmitoyl cysteine" evidence="1">
    <location>
        <position position="5"/>
    </location>
</feature>
<feature type="lipid moiety-binding region" description="S-palmitoyl cysteine" evidence="1">
    <location>
        <position position="74"/>
    </location>
</feature>
<feature type="glycosylation site" description="N-linked (GlcNAc...) asparagine" evidence="2">
    <location>
        <position position="127"/>
    </location>
</feature>
<feature type="glycosylation site" description="N-linked (GlcNAc...) asparagine" evidence="3">
    <location>
        <position position="131"/>
    </location>
</feature>
<feature type="glycosylation site" description="N-linked (GlcNAc...) asparagine" evidence="3">
    <location>
        <position position="157"/>
    </location>
</feature>
<feature type="glycosylation site" description="N-linked (GlcNAc...) asparagine" evidence="2">
    <location>
        <position position="197"/>
    </location>
</feature>
<dbReference type="EMBL" id="D14883">
    <property type="protein sequence ID" value="BAA03602.1"/>
    <property type="molecule type" value="mRNA"/>
</dbReference>
<dbReference type="CCDS" id="CCDS16454.1"/>
<dbReference type="PIR" id="I49561">
    <property type="entry name" value="I49561"/>
</dbReference>
<dbReference type="RefSeq" id="NP_001129527.1">
    <property type="nucleotide sequence ID" value="NM_001136055.2"/>
</dbReference>
<dbReference type="RefSeq" id="NP_001258359.1">
    <property type="nucleotide sequence ID" value="NM_001271430.1"/>
</dbReference>
<dbReference type="RefSeq" id="NP_001258360.1">
    <property type="nucleotide sequence ID" value="NM_001271431.1"/>
</dbReference>
<dbReference type="RefSeq" id="NP_001258361.1">
    <property type="nucleotide sequence ID" value="NM_001271432.1"/>
</dbReference>
<dbReference type="RefSeq" id="NP_001258390.1">
    <property type="nucleotide sequence ID" value="NM_001271461.1"/>
</dbReference>
<dbReference type="RefSeq" id="NP_001258391.1">
    <property type="nucleotide sequence ID" value="NM_001271462.1"/>
</dbReference>
<dbReference type="RefSeq" id="NP_031682.1">
    <property type="nucleotide sequence ID" value="NM_007656.5"/>
</dbReference>
<dbReference type="SMR" id="P40237"/>
<dbReference type="BioGRID" id="198614">
    <property type="interactions" value="1"/>
</dbReference>
<dbReference type="FunCoup" id="P40237">
    <property type="interactions" value="495"/>
</dbReference>
<dbReference type="STRING" id="10090.ENSMUSP00000028644"/>
<dbReference type="GlyCosmos" id="P40237">
    <property type="glycosylation" value="4 sites, No reported glycans"/>
</dbReference>
<dbReference type="GlyGen" id="P40237">
    <property type="glycosylation" value="4 sites"/>
</dbReference>
<dbReference type="iPTMnet" id="P40237"/>
<dbReference type="PhosphoSitePlus" id="P40237"/>
<dbReference type="SwissPalm" id="P40237"/>
<dbReference type="jPOST" id="P40237"/>
<dbReference type="PaxDb" id="10090-ENSMUSP00000028644"/>
<dbReference type="PeptideAtlas" id="P40237"/>
<dbReference type="ProteomicsDB" id="283753"/>
<dbReference type="Pumba" id="P40237"/>
<dbReference type="Antibodypedia" id="3743">
    <property type="antibodies" value="649 antibodies from 43 providers"/>
</dbReference>
<dbReference type="DNASU" id="12521"/>
<dbReference type="Ensembl" id="ENSMUST00000028644.11">
    <property type="protein sequence ID" value="ENSMUSP00000028644.5"/>
    <property type="gene ID" value="ENSMUSG00000027215.14"/>
</dbReference>
<dbReference type="Ensembl" id="ENSMUST00000099696.8">
    <property type="protein sequence ID" value="ENSMUSP00000097287.2"/>
    <property type="gene ID" value="ENSMUSG00000027215.14"/>
</dbReference>
<dbReference type="Ensembl" id="ENSMUST00000111257.8">
    <property type="protein sequence ID" value="ENSMUSP00000106888.2"/>
    <property type="gene ID" value="ENSMUSG00000027215.14"/>
</dbReference>
<dbReference type="Ensembl" id="ENSMUST00000116457.9">
    <property type="protein sequence ID" value="ENSMUSP00000112158.3"/>
    <property type="gene ID" value="ENSMUSG00000027215.14"/>
</dbReference>
<dbReference type="GeneID" id="12521"/>
<dbReference type="KEGG" id="mmu:12521"/>
<dbReference type="UCSC" id="uc008lfx.2">
    <property type="organism name" value="mouse"/>
</dbReference>
<dbReference type="AGR" id="MGI:104651"/>
<dbReference type="CTD" id="3732"/>
<dbReference type="MGI" id="MGI:104651">
    <property type="gene designation" value="Cd82"/>
</dbReference>
<dbReference type="VEuPathDB" id="HostDB:ENSMUSG00000027215"/>
<dbReference type="eggNOG" id="KOG3882">
    <property type="taxonomic scope" value="Eukaryota"/>
</dbReference>
<dbReference type="GeneTree" id="ENSGT00940000158481"/>
<dbReference type="InParanoid" id="P40237"/>
<dbReference type="OMA" id="TTEHAWD"/>
<dbReference type="OrthoDB" id="10016273at2759"/>
<dbReference type="PhylomeDB" id="P40237"/>
<dbReference type="TreeFam" id="TF352892"/>
<dbReference type="BioGRID-ORCS" id="12521">
    <property type="hits" value="2 hits in 77 CRISPR screens"/>
</dbReference>
<dbReference type="ChiTaRS" id="Cd82">
    <property type="organism name" value="mouse"/>
</dbReference>
<dbReference type="PRO" id="PR:P40237"/>
<dbReference type="Proteomes" id="UP000000589">
    <property type="component" value="Chromosome 2"/>
</dbReference>
<dbReference type="RNAct" id="P40237">
    <property type="molecule type" value="protein"/>
</dbReference>
<dbReference type="Bgee" id="ENSMUSG00000027215">
    <property type="expression patterns" value="Expressed in parotid gland and 253 other cell types or tissues"/>
</dbReference>
<dbReference type="ExpressionAtlas" id="P40237">
    <property type="expression patterns" value="baseline and differential"/>
</dbReference>
<dbReference type="GO" id="GO:0045335">
    <property type="term" value="C:phagocytic vesicle"/>
    <property type="evidence" value="ECO:0007669"/>
    <property type="project" value="UniProtKB-SubCell"/>
</dbReference>
<dbReference type="GO" id="GO:0005886">
    <property type="term" value="C:plasma membrane"/>
    <property type="evidence" value="ECO:0007669"/>
    <property type="project" value="UniProtKB-SubCell"/>
</dbReference>
<dbReference type="CDD" id="cd03160">
    <property type="entry name" value="CD37_CD82_like_LEL"/>
    <property type="match status" value="1"/>
</dbReference>
<dbReference type="FunFam" id="1.10.1450.10:FF:000021">
    <property type="entry name" value="Tetraspanin"/>
    <property type="match status" value="1"/>
</dbReference>
<dbReference type="Gene3D" id="1.10.1450.10">
    <property type="entry name" value="Tetraspanin"/>
    <property type="match status" value="1"/>
</dbReference>
<dbReference type="InterPro" id="IPR018499">
    <property type="entry name" value="Tetraspanin/Peripherin"/>
</dbReference>
<dbReference type="InterPro" id="IPR000301">
    <property type="entry name" value="Tetraspanin_animals"/>
</dbReference>
<dbReference type="InterPro" id="IPR018503">
    <property type="entry name" value="Tetraspanin_CS"/>
</dbReference>
<dbReference type="InterPro" id="IPR008952">
    <property type="entry name" value="Tetraspanin_EC2_sf"/>
</dbReference>
<dbReference type="PANTHER" id="PTHR19282:SF44">
    <property type="entry name" value="CD82 ANTIGEN"/>
    <property type="match status" value="1"/>
</dbReference>
<dbReference type="PANTHER" id="PTHR19282">
    <property type="entry name" value="TETRASPANIN"/>
    <property type="match status" value="1"/>
</dbReference>
<dbReference type="Pfam" id="PF00335">
    <property type="entry name" value="Tetraspanin"/>
    <property type="match status" value="1"/>
</dbReference>
<dbReference type="PIRSF" id="PIRSF002419">
    <property type="entry name" value="Tetraspanin"/>
    <property type="match status" value="1"/>
</dbReference>
<dbReference type="PRINTS" id="PR00259">
    <property type="entry name" value="TMFOUR"/>
</dbReference>
<dbReference type="SUPFAM" id="SSF48652">
    <property type="entry name" value="Tetraspanin"/>
    <property type="match status" value="1"/>
</dbReference>
<dbReference type="PROSITE" id="PS00421">
    <property type="entry name" value="TM4_1"/>
    <property type="match status" value="1"/>
</dbReference>
<gene>
    <name type="primary">Cd82</name>
    <name type="synonym">Kai1</name>
</gene>
<evidence type="ECO:0000250" key="1">
    <source>
        <dbReference type="UniProtKB" id="P27701"/>
    </source>
</evidence>
<evidence type="ECO:0000255" key="2"/>
<evidence type="ECO:0000269" key="3">
    <source>
    </source>
</evidence>
<evidence type="ECO:0000269" key="4">
    <source>
    </source>
</evidence>
<evidence type="ECO:0000269" key="5">
    <source>
    </source>
</evidence>
<evidence type="ECO:0000269" key="6">
    <source>
    </source>
</evidence>
<evidence type="ECO:0000269" key="7">
    <source>
    </source>
</evidence>
<evidence type="ECO:0000269" key="8">
    <source>
    </source>
</evidence>
<evidence type="ECO:0000269" key="9">
    <source>
    </source>
</evidence>
<evidence type="ECO:0000305" key="10"/>
<organism>
    <name type="scientific">Mus musculus</name>
    <name type="common">Mouse</name>
    <dbReference type="NCBI Taxonomy" id="10090"/>
    <lineage>
        <taxon>Eukaryota</taxon>
        <taxon>Metazoa</taxon>
        <taxon>Chordata</taxon>
        <taxon>Craniata</taxon>
        <taxon>Vertebrata</taxon>
        <taxon>Euteleostomi</taxon>
        <taxon>Mammalia</taxon>
        <taxon>Eutheria</taxon>
        <taxon>Euarchontoglires</taxon>
        <taxon>Glires</taxon>
        <taxon>Rodentia</taxon>
        <taxon>Myomorpha</taxon>
        <taxon>Muroidea</taxon>
        <taxon>Muridae</taxon>
        <taxon>Murinae</taxon>
        <taxon>Mus</taxon>
        <taxon>Mus</taxon>
    </lineage>
</organism>
<proteinExistence type="evidence at protein level"/>
<name>CD82_MOUSE</name>
<keyword id="KW-1003">Cell membrane</keyword>
<keyword id="KW-0968">Cytoplasmic vesicle</keyword>
<keyword id="KW-0325">Glycoprotein</keyword>
<keyword id="KW-0449">Lipoprotein</keyword>
<keyword id="KW-0472">Membrane</keyword>
<keyword id="KW-0564">Palmitate</keyword>
<keyword id="KW-1185">Reference proteome</keyword>
<keyword id="KW-0812">Transmembrane</keyword>
<keyword id="KW-1133">Transmembrane helix</keyword>
<sequence length="266" mass="29629">MGAGCVKVTKYFLFLFNLLFFILGAVILGFGVWILADKNSFISVLQTSSSSLQVGAYVFIGVGAITIVMGFLGCIGAVNEVRCLLGLYFVFLLLILIAQVTVGVLFYFNADKLKKEMGNTVMDIIRNYTANATSSREEAWDYVQAQVKCCGWVSHYNWTENEELMGFTKTTYPCSCEKIKEEDNQLIVKKGFCEADNSTVSENNPEDWPVNTEGCMEKAQAWLQENFGILLGVCAGVAVIELLGLFLSICLCRYIHSEDYSKVPKY</sequence>
<reference key="1">
    <citation type="journal article" date="1994" name="Cell. Immunol.">
        <title>Mouse homologue of C33 antigen (CD82), a member of the transmembrane 4 superfamily: complementary DNA, genomic structure, and expression.</title>
        <authorList>
            <person name="Nagira M."/>
            <person name="Imai T."/>
            <person name="Ishikawa I."/>
            <person name="Uwabe K.I."/>
            <person name="Yoshie O."/>
        </authorList>
    </citation>
    <scope>NUCLEOTIDE SEQUENCE [MRNA]</scope>
    <scope>TISSUE SPECIFICITY</scope>
    <source>
        <strain>C57BL/6J</strain>
    </source>
</reference>
<reference key="2">
    <citation type="journal article" date="2009" name="Mol. Cell. Proteomics">
        <title>The mouse C2C12 myoblast cell surface N-linked glycoproteome: identification, glycosite occupancy, and membrane orientation.</title>
        <authorList>
            <person name="Gundry R.L."/>
            <person name="Raginski K."/>
            <person name="Tarasova Y."/>
            <person name="Tchernyshyov I."/>
            <person name="Bausch-Fluck D."/>
            <person name="Elliott S.T."/>
            <person name="Boheler K.R."/>
            <person name="Van Eyk J.E."/>
            <person name="Wollscheid B."/>
        </authorList>
    </citation>
    <scope>GLYCOSYLATION [LARGE SCALE ANALYSIS] AT ASN-131 AND ASN-157</scope>
    <source>
        <tissue>Myoblast</tissue>
    </source>
</reference>
<reference key="3">
    <citation type="journal article" date="2010" name="Cell">
        <title>A tissue-specific atlas of mouse protein phosphorylation and expression.</title>
        <authorList>
            <person name="Huttlin E.L."/>
            <person name="Jedrychowski M.P."/>
            <person name="Elias J.E."/>
            <person name="Goswami T."/>
            <person name="Rad R."/>
            <person name="Beausoleil S.A."/>
            <person name="Villen J."/>
            <person name="Haas W."/>
            <person name="Sowa M.E."/>
            <person name="Gygi S.P."/>
        </authorList>
    </citation>
    <scope>IDENTIFICATION BY MASS SPECTROMETRY [LARGE SCALE ANALYSIS]</scope>
    <source>
        <tissue>Brain</tissue>
        <tissue>Kidney</tissue>
        <tissue>Liver</tissue>
        <tissue>Lung</tissue>
        <tissue>Spleen</tissue>
    </source>
</reference>
<reference key="4">
    <citation type="journal article" date="2011" name="Infect. Immun.">
        <title>The tetraspanin CD82 is specifically recruited to fungal and bacterial phagosomes prior to acidification.</title>
        <authorList>
            <person name="Artavanis-Tsakonas K."/>
            <person name="Kasperkovitz P.V."/>
            <person name="Papa E."/>
            <person name="Cardenas M.L."/>
            <person name="Khan N.S."/>
            <person name="Van der Veen A.G."/>
            <person name="Ploegh H.L."/>
            <person name="Vyas J.M."/>
        </authorList>
    </citation>
    <scope>FUNCTION</scope>
    <scope>SUBCELLULAR LOCATION</scope>
</reference>
<reference key="5">
    <citation type="journal article" date="2015" name="Exp. Cell Res.">
        <title>Homozygous loss of mouse tetraspanin CD82 enhances integrin alphaIIbbeta3 expression and clot retraction in platelets.</title>
        <authorList>
            <person name="Uchtmann K."/>
            <person name="Park E.R."/>
            <person name="Bergsma A."/>
            <person name="Segula J."/>
            <person name="Edick M.J."/>
            <person name="Miranti C.K."/>
        </authorList>
    </citation>
    <scope>DISRUPTION PHENOTYPE</scope>
</reference>
<reference key="6">
    <citation type="journal article" date="2019" name="FASEB J.">
        <title>CD82 controls CpG-dependent TLR9 signaling.</title>
        <authorList>
            <person name="Khan N.S."/>
            <person name="Lukason D.P."/>
            <person name="Feliu M."/>
            <person name="Ward R.A."/>
            <person name="Lord A.K."/>
            <person name="Reedy J.L."/>
            <person name="Ramirez-Ortiz Z.G."/>
            <person name="Tam J.M."/>
            <person name="Kasperkovitz P.V."/>
            <person name="Negoro P.E."/>
            <person name="Vyas T.D."/>
            <person name="Xu S."/>
            <person name="Brinkmann M.M."/>
            <person name="Acharaya M."/>
            <person name="Artavanis-Tsakonas K."/>
            <person name="Frickel E.M."/>
            <person name="Becker C.E."/>
            <person name="Dagher Z."/>
            <person name="Kim Y.M."/>
            <person name="Latz E."/>
            <person name="Ploegh H.L."/>
            <person name="Mansour M.K."/>
            <person name="Miranti C.K."/>
            <person name="Levitz S.M."/>
            <person name="Vyas J.M."/>
        </authorList>
    </citation>
    <scope>FUNCTION</scope>
    <scope>SUBCELLULAR LOCATION</scope>
    <scope>INTERACTION WITH TLR9</scope>
</reference>
<reference key="7">
    <citation type="journal article" date="2021" name="J. Hematol. Oncol.">
        <title>KAI1(CD82) is a key molecule to control angiogenesis and switch angiogenic milieu to quiescent state.</title>
        <authorList>
            <person name="Lee J.W."/>
            <person name="Hur J."/>
            <person name="Kwon Y.W."/>
            <person name="Chae C.W."/>
            <person name="Choi J.I."/>
            <person name="Hwang I."/>
            <person name="Yun J.Y."/>
            <person name="Kang J.A."/>
            <person name="Choi Y.E."/>
            <person name="Kim Y.H."/>
            <person name="Lee S.E."/>
            <person name="Lee C."/>
            <person name="Jo D.H."/>
            <person name="Seok H."/>
            <person name="Cho B.S."/>
            <person name="Baek S.H."/>
            <person name="Kim H.S."/>
        </authorList>
    </citation>
    <scope>FUNCTION</scope>
    <scope>SUBCELLULAR LOCATION</scope>
</reference>
<reference key="8">
    <citation type="journal article" date="2022" name="IScience">
        <title>Tetraspanin CD82 restrains phagocyte migration but supports macrophage activation.</title>
        <authorList>
            <person name="McGowan E.N.S."/>
            <person name="Wong O."/>
            <person name="Jones E."/>
            <person name="Nguyen J."/>
            <person name="Wee J."/>
            <person name="Demaria M.C."/>
            <person name="Deliyanti D."/>
            <person name="Johnson C.J."/>
            <person name="Hickey M.J."/>
            <person name="McConville M.J."/>
            <person name="Wilkinson-Berka J.L."/>
            <person name="Wright M.D."/>
            <person name="Binger K.J."/>
        </authorList>
    </citation>
    <scope>FUNCTION</scope>
    <scope>DISRUPTION PHENOTYPE</scope>
</reference>
<protein>
    <recommendedName>
        <fullName>CD82 antigen</fullName>
    </recommendedName>
    <alternativeName>
        <fullName>C33 antigen</fullName>
    </alternativeName>
    <alternativeName>
        <fullName>IA4</fullName>
    </alternativeName>
    <alternativeName>
        <fullName>Inducible membrane protein R2</fullName>
    </alternativeName>
    <alternativeName>
        <fullName>Metastasis suppressor Kangai-1 homolog</fullName>
    </alternativeName>
    <cdAntigenName>CD82</cdAntigenName>
</protein>
<comment type="function">
    <text evidence="1 4 6 7 8">Structural component of specialized membrane microdomains known as tetraspanin-enriched microdomains (TERMs), which act as platforms for receptor clustering and signaling. Participates thereby in diverse biological functions such as cell signal transduction, adhesion, migration and protein trafficking. Acts as a attenuator of EGF signaling, facilitating ligand-induced endocytosis of the receptor and its subsequent desensitization. Mechanistically, modulates ligand-induced ubiquitination and trafficking of EGFR via E3 ligase CBL phosphorylation by PKC. Increases cell-matrix adhesion by regulating the membrane organization of integrin alpha4/ITA4. Modulates adhesion and suppresses cell migration through other integrins such as the alpha6/ITGA6 and beta1/ITGB1. Decreases cell-associated plasminogen activation by interfering with the interaction between urokinase-type plasminogen activator/PLAU and its receptor PLAUR (By similarity). Associates with CD4 or CD8 and delivers costimulatory signals for the TCR/CD3 pathway. Plays a role in the restrains phagocyte migration but supports macrophage activation (By similarity). Plays a role in TLR9 trafficking to acidified CpG-containing compartments by controlling interaction between TLR9 and VAMP3 and subsequent myddosome assembly (PubMed:31408613). Inhibits LPS-induced inflammatory response by preventing binding of LPS to TLR4 on the cell surface (By similarity). Plays a role in the activation of macrophages into anti-inflammatory phenotypes (PubMed:35754722). Independently of Toll-like receptor (TLR) signaling, is recruited to pathogen-containing phagosomes prior to fusion with lysosomes and participates in antigen presentation (PubMed:21149584). Also acts to control angiogenesis and switch angiogenic milieu to quiescent state by binding and sequestering VEGFA and PDGFA to inhibit the signaling they trigger via their respective cell surface receptor (PubMed:34530889).</text>
</comment>
<comment type="subunit">
    <text evidence="1 6">Forms homooligomers. Interacts directly with IGSF8. Interacts with EGFR (By similarity). Interacts with VEGFA and PDGFA (By similarity). Interacts with ITGA4. Interacts with ITGA6; this interaction reduces ITGA6 cell surface expression. Interacts with ITGB1. Interacts with TLR4; this interaction inhibits TLR4-mediated signaling pathway (By similarity). Interacts with TLR9 (PubMed:31408613). Interacts with PLAUR (By similarity).</text>
</comment>
<comment type="subcellular location">
    <subcellularLocation>
        <location evidence="7">Cell membrane</location>
        <topology evidence="2">Multi-pass membrane protein</topology>
    </subcellularLocation>
    <subcellularLocation>
        <location evidence="4">Cytoplasmic vesicle</location>
        <location evidence="4">Phagosome</location>
    </subcellularLocation>
</comment>
<comment type="tissue specificity">
    <text evidence="9">Highest expression in the spleen and the kidney. Low expression in skeletal muscle and in the heart.</text>
</comment>
<comment type="PTM">
    <text evidence="1">Palmitoylated. Palmitoylation contributes to oligomerization and surface expression.</text>
</comment>
<comment type="disruption phenotype">
    <text evidence="5 8">Cd82-deletion mice are phenotypically normal (PubMed:26562164). However, they display reduced bleed times and blood volume collection and an increase in platelet number (PubMed:26562164). They also have increased retinal macrophage recruitment and exacerbated pathology. Cd82-deficient phagocytes infiltrate tissues in greater numbers in multiple disease models, and neutrophils also display enhanced migration (PubMed:35754722).</text>
</comment>
<comment type="similarity">
    <text evidence="10">Belongs to the tetraspanin (TM4SF) family.</text>
</comment>